<protein>
    <recommendedName>
        <fullName evidence="1">ATP synthase gamma chain</fullName>
    </recommendedName>
    <alternativeName>
        <fullName evidence="1">ATP synthase F1 sector gamma subunit</fullName>
    </alternativeName>
    <alternativeName>
        <fullName evidence="1">F-ATPase gamma subunit</fullName>
    </alternativeName>
</protein>
<gene>
    <name evidence="1" type="primary">atpG</name>
    <name type="ordered locus">BMASAVP1_A3356</name>
</gene>
<evidence type="ECO:0000255" key="1">
    <source>
        <dbReference type="HAMAP-Rule" id="MF_00815"/>
    </source>
</evidence>
<reference key="1">
    <citation type="journal article" date="2010" name="Genome Biol. Evol.">
        <title>Continuing evolution of Burkholderia mallei through genome reduction and large-scale rearrangements.</title>
        <authorList>
            <person name="Losada L."/>
            <person name="Ronning C.M."/>
            <person name="DeShazer D."/>
            <person name="Woods D."/>
            <person name="Fedorova N."/>
            <person name="Kim H.S."/>
            <person name="Shabalina S.A."/>
            <person name="Pearson T.R."/>
            <person name="Brinkac L."/>
            <person name="Tan P."/>
            <person name="Nandi T."/>
            <person name="Crabtree J."/>
            <person name="Badger J."/>
            <person name="Beckstrom-Sternberg S."/>
            <person name="Saqib M."/>
            <person name="Schutzer S.E."/>
            <person name="Keim P."/>
            <person name="Nierman W.C."/>
        </authorList>
    </citation>
    <scope>NUCLEOTIDE SEQUENCE [LARGE SCALE GENOMIC DNA]</scope>
    <source>
        <strain>SAVP1</strain>
    </source>
</reference>
<name>ATPG_BURMS</name>
<feature type="chain" id="PRO_1000053171" description="ATP synthase gamma chain">
    <location>
        <begin position="1"/>
        <end position="291"/>
    </location>
</feature>
<organism>
    <name type="scientific">Burkholderia mallei (strain SAVP1)</name>
    <dbReference type="NCBI Taxonomy" id="320388"/>
    <lineage>
        <taxon>Bacteria</taxon>
        <taxon>Pseudomonadati</taxon>
        <taxon>Pseudomonadota</taxon>
        <taxon>Betaproteobacteria</taxon>
        <taxon>Burkholderiales</taxon>
        <taxon>Burkholderiaceae</taxon>
        <taxon>Burkholderia</taxon>
        <taxon>pseudomallei group</taxon>
    </lineage>
</organism>
<keyword id="KW-0066">ATP synthesis</keyword>
<keyword id="KW-0997">Cell inner membrane</keyword>
<keyword id="KW-1003">Cell membrane</keyword>
<keyword id="KW-0139">CF(1)</keyword>
<keyword id="KW-0375">Hydrogen ion transport</keyword>
<keyword id="KW-0406">Ion transport</keyword>
<keyword id="KW-0472">Membrane</keyword>
<keyword id="KW-0813">Transport</keyword>
<proteinExistence type="inferred from homology"/>
<sequence>MAGMKEIRGKIKSVQNTRKITKAMEMVAASKMRRAQERMRAARPYAEKVRAIAAHMSRANPEYRHPFMVANDGVKTAGMILVTTDKGLCGGLNTNVLRASLQKFKELEEQGQKVEATAIGGKGLGFLNRFGAKVISQVVHLGDTPHLDKLIGAVKTQLDLYSEGKLSAVYLAYTRFVNTMKQETVIEQLLPLSSEHFDANDGTPATSWDYIYEPDAQAVVDELLVRYVEALVYQAVAENMASEQSARMVAMKAASDNAKTVISELQLSYNKSRQAAITKELSEIVGGAAAV</sequence>
<comment type="function">
    <text evidence="1">Produces ATP from ADP in the presence of a proton gradient across the membrane. The gamma chain is believed to be important in regulating ATPase activity and the flow of protons through the CF(0) complex.</text>
</comment>
<comment type="subunit">
    <text evidence="1">F-type ATPases have 2 components, CF(1) - the catalytic core - and CF(0) - the membrane proton channel. CF(1) has five subunits: alpha(3), beta(3), gamma(1), delta(1), epsilon(1). CF(0) has three main subunits: a, b and c.</text>
</comment>
<comment type="subcellular location">
    <subcellularLocation>
        <location evidence="1">Cell inner membrane</location>
        <topology evidence="1">Peripheral membrane protein</topology>
    </subcellularLocation>
</comment>
<comment type="similarity">
    <text evidence="1">Belongs to the ATPase gamma chain family.</text>
</comment>
<accession>A1V8T2</accession>
<dbReference type="EMBL" id="CP000526">
    <property type="protein sequence ID" value="ABM51946.1"/>
    <property type="molecule type" value="Genomic_DNA"/>
</dbReference>
<dbReference type="RefSeq" id="WP_004195831.1">
    <property type="nucleotide sequence ID" value="NC_008785.1"/>
</dbReference>
<dbReference type="SMR" id="A1V8T2"/>
<dbReference type="GeneID" id="92980625"/>
<dbReference type="KEGG" id="bmv:BMASAVP1_A3356"/>
<dbReference type="HOGENOM" id="CLU_050669_0_1_4"/>
<dbReference type="GO" id="GO:0005886">
    <property type="term" value="C:plasma membrane"/>
    <property type="evidence" value="ECO:0007669"/>
    <property type="project" value="UniProtKB-SubCell"/>
</dbReference>
<dbReference type="GO" id="GO:0045259">
    <property type="term" value="C:proton-transporting ATP synthase complex"/>
    <property type="evidence" value="ECO:0007669"/>
    <property type="project" value="UniProtKB-KW"/>
</dbReference>
<dbReference type="GO" id="GO:0005524">
    <property type="term" value="F:ATP binding"/>
    <property type="evidence" value="ECO:0007669"/>
    <property type="project" value="UniProtKB-UniRule"/>
</dbReference>
<dbReference type="GO" id="GO:0046933">
    <property type="term" value="F:proton-transporting ATP synthase activity, rotational mechanism"/>
    <property type="evidence" value="ECO:0007669"/>
    <property type="project" value="UniProtKB-UniRule"/>
</dbReference>
<dbReference type="GO" id="GO:0042777">
    <property type="term" value="P:proton motive force-driven plasma membrane ATP synthesis"/>
    <property type="evidence" value="ECO:0007669"/>
    <property type="project" value="UniProtKB-UniRule"/>
</dbReference>
<dbReference type="CDD" id="cd12151">
    <property type="entry name" value="F1-ATPase_gamma"/>
    <property type="match status" value="1"/>
</dbReference>
<dbReference type="FunFam" id="1.10.287.80:FF:000005">
    <property type="entry name" value="ATP synthase gamma chain"/>
    <property type="match status" value="1"/>
</dbReference>
<dbReference type="Gene3D" id="3.40.1380.10">
    <property type="match status" value="1"/>
</dbReference>
<dbReference type="Gene3D" id="1.10.287.80">
    <property type="entry name" value="ATP synthase, gamma subunit, helix hairpin domain"/>
    <property type="match status" value="1"/>
</dbReference>
<dbReference type="HAMAP" id="MF_00815">
    <property type="entry name" value="ATP_synth_gamma_bact"/>
    <property type="match status" value="1"/>
</dbReference>
<dbReference type="InterPro" id="IPR035968">
    <property type="entry name" value="ATP_synth_F1_ATPase_gsu"/>
</dbReference>
<dbReference type="InterPro" id="IPR000131">
    <property type="entry name" value="ATP_synth_F1_gsu"/>
</dbReference>
<dbReference type="InterPro" id="IPR023632">
    <property type="entry name" value="ATP_synth_F1_gsu_CS"/>
</dbReference>
<dbReference type="NCBIfam" id="TIGR01146">
    <property type="entry name" value="ATPsyn_F1gamma"/>
    <property type="match status" value="1"/>
</dbReference>
<dbReference type="NCBIfam" id="NF004144">
    <property type="entry name" value="PRK05621.1-1"/>
    <property type="match status" value="1"/>
</dbReference>
<dbReference type="PANTHER" id="PTHR11693">
    <property type="entry name" value="ATP SYNTHASE GAMMA CHAIN"/>
    <property type="match status" value="1"/>
</dbReference>
<dbReference type="PANTHER" id="PTHR11693:SF22">
    <property type="entry name" value="ATP SYNTHASE SUBUNIT GAMMA, MITOCHONDRIAL"/>
    <property type="match status" value="1"/>
</dbReference>
<dbReference type="Pfam" id="PF00231">
    <property type="entry name" value="ATP-synt"/>
    <property type="match status" value="1"/>
</dbReference>
<dbReference type="PRINTS" id="PR00126">
    <property type="entry name" value="ATPASEGAMMA"/>
</dbReference>
<dbReference type="SUPFAM" id="SSF52943">
    <property type="entry name" value="ATP synthase (F1-ATPase), gamma subunit"/>
    <property type="match status" value="1"/>
</dbReference>
<dbReference type="PROSITE" id="PS00153">
    <property type="entry name" value="ATPASE_GAMMA"/>
    <property type="match status" value="1"/>
</dbReference>